<accession>P43632</accession>
<accession>Q6H2G7</accession>
<comment type="function">
    <text evidence="4">Receptor on natural killer (NK) cells for HLA-C alleles. Does not inhibit the activity of NK cells.</text>
</comment>
<comment type="subunit">
    <text evidence="5">Interacts with HLA-F; this interaction is direct.</text>
</comment>
<comment type="interaction">
    <interactant intactId="EBI-13916812">
        <id>P43632</id>
    </interactant>
    <interactant intactId="EBI-1046513">
        <id>P01889</id>
        <label>HLA-B</label>
    </interactant>
    <organismsDiffer>false</organismsDiffer>
    <experiments>2</experiments>
</comment>
<comment type="interaction">
    <interactant intactId="EBI-13916812">
        <id>P43632</id>
    </interactant>
    <interactant intactId="EBI-1051396">
        <id>P10321</id>
        <label>HLA-C</label>
    </interactant>
    <organismsDiffer>false</organismsDiffer>
    <experiments>8</experiments>
</comment>
<comment type="interaction">
    <interactant intactId="EBI-13916812">
        <id>P43632</id>
    </interactant>
    <interactant intactId="EBI-2811134">
        <id>P30511</id>
        <label>HLA-F</label>
    </interactant>
    <organismsDiffer>false</organismsDiffer>
    <experiments>4</experiments>
</comment>
<comment type="subcellular location">
    <subcellularLocation>
        <location>Cell membrane</location>
        <topology>Single-pass type I membrane protein</topology>
    </subcellularLocation>
</comment>
<comment type="similarity">
    <text evidence="7">Belongs to the immunoglobulin superfamily.</text>
</comment>
<comment type="sequence caution" evidence="7">
    <conflict type="erroneous initiation">
        <sequence resource="EMBL-CDS" id="AAC50336"/>
    </conflict>
</comment>
<feature type="signal peptide" evidence="1">
    <location>
        <begin position="1"/>
        <end position="21"/>
    </location>
</feature>
<feature type="chain" id="PRO_0000015085" description="Killer cell immunoglobulin-like receptor 2DS4">
    <location>
        <begin position="22"/>
        <end position="304"/>
    </location>
</feature>
<feature type="topological domain" description="Extracellular" evidence="2">
    <location>
        <begin position="22"/>
        <end position="245"/>
    </location>
</feature>
<feature type="transmembrane region" description="Helical" evidence="2">
    <location>
        <begin position="246"/>
        <end position="265"/>
    </location>
</feature>
<feature type="topological domain" description="Cytoplasmic" evidence="2">
    <location>
        <begin position="266"/>
        <end position="304"/>
    </location>
</feature>
<feature type="domain" description="Ig-like C2-type 1">
    <location>
        <begin position="42"/>
        <end position="107"/>
    </location>
</feature>
<feature type="domain" description="Ig-like C2-type 2">
    <location>
        <begin position="142"/>
        <end position="205"/>
    </location>
</feature>
<feature type="region of interest" description="Disordered" evidence="3">
    <location>
        <begin position="220"/>
        <end position="239"/>
    </location>
</feature>
<feature type="region of interest" description="Disordered" evidence="3">
    <location>
        <begin position="280"/>
        <end position="304"/>
    </location>
</feature>
<feature type="glycosylation site" description="N-linked (GlcNAc...) asparagine" evidence="2">
    <location>
        <position position="67"/>
    </location>
</feature>
<feature type="glycosylation site" description="N-linked (GlcNAc...) asparagine" evidence="2">
    <location>
        <position position="84"/>
    </location>
</feature>
<feature type="glycosylation site" description="N-linked (GlcNAc...) asparagine" evidence="2">
    <location>
        <position position="144"/>
    </location>
</feature>
<feature type="glycosylation site" description="N-linked (GlcNAc...) asparagine" evidence="2">
    <location>
        <position position="178"/>
    </location>
</feature>
<feature type="glycosylation site" description="N-linked (GlcNAc...) asparagine" evidence="2">
    <location>
        <position position="211"/>
    </location>
</feature>
<feature type="disulfide bond" evidence="4">
    <location>
        <begin position="49"/>
        <end position="100"/>
    </location>
</feature>
<feature type="disulfide bond" evidence="4">
    <location>
        <begin position="149"/>
        <end position="198"/>
    </location>
</feature>
<feature type="sequence variant" id="VAR_049980" description="In dbSNP:rs1130480.">
    <original>K</original>
    <variation>M</variation>
    <location>
        <position position="65"/>
    </location>
</feature>
<feature type="sequence variant" id="VAR_049981" description="In dbSNP:rs1130481.">
    <original>N</original>
    <variation>D</variation>
    <location>
        <position position="68"/>
    </location>
</feature>
<feature type="sequence variant" id="VAR_049982" description="In dbSNP:rs1130482.">
    <original>H</original>
    <variation>R</variation>
    <location>
        <position position="71"/>
    </location>
</feature>
<feature type="sequence variant" id="VAR_049983" description="In dbSNP:rs1130487.">
    <original>P</original>
    <variation>R</variation>
    <location>
        <position position="89"/>
    </location>
</feature>
<feature type="sequence variant" id="VAR_049984" description="In dbSNP:rs1143508.">
    <original>P</original>
    <variation>H</variation>
    <location>
        <position position="92"/>
    </location>
</feature>
<feature type="sequence variant" id="VAR_049985" description="In dbSNP:rs1130491.">
    <original>V</original>
    <variation>D</variation>
    <location>
        <position position="93"/>
    </location>
</feature>
<feature type="sequence variant" id="VAR_049986" description="In dbSNP:rs10406301.">
    <original>S</original>
    <variation>C</variation>
    <location>
        <position position="103"/>
    </location>
</feature>
<feature type="sequence variant" id="VAR_059423" description="In dbSNP:rs4806591.">
    <original>N</original>
    <variation>H</variation>
    <location>
        <position position="178"/>
    </location>
</feature>
<feature type="sequence variant" id="VAR_059424" description="In dbSNP:rs1049290.">
    <original>A</original>
    <variation>S</variation>
    <location>
        <position position="205"/>
    </location>
</feature>
<feature type="sequence variant" id="VAR_059425" description="In dbSNP:rs1063326.">
    <original>K</original>
    <variation>N</variation>
    <location>
        <position position="254"/>
    </location>
</feature>
<feature type="strand" evidence="9">
    <location>
        <begin position="30"/>
        <end position="35"/>
    </location>
</feature>
<feature type="strand" evidence="9">
    <location>
        <begin position="37"/>
        <end position="40"/>
    </location>
</feature>
<feature type="strand" evidence="9">
    <location>
        <begin position="45"/>
        <end position="53"/>
    </location>
</feature>
<feature type="strand" evidence="9">
    <location>
        <begin position="56"/>
        <end position="62"/>
    </location>
</feature>
<feature type="strand" evidence="9">
    <location>
        <begin position="68"/>
        <end position="72"/>
    </location>
</feature>
<feature type="strand" evidence="9">
    <location>
        <begin position="80"/>
        <end position="87"/>
    </location>
</feature>
<feature type="strand" evidence="9">
    <location>
        <begin position="96"/>
        <end position="106"/>
    </location>
</feature>
<feature type="strand" evidence="9">
    <location>
        <begin position="118"/>
        <end position="124"/>
    </location>
</feature>
<feature type="strand" evidence="9">
    <location>
        <begin position="130"/>
        <end position="135"/>
    </location>
</feature>
<feature type="strand" evidence="9">
    <location>
        <begin position="137"/>
        <end position="139"/>
    </location>
</feature>
<feature type="strand" evidence="9">
    <location>
        <begin position="144"/>
        <end position="153"/>
    </location>
</feature>
<feature type="strand" evidence="9">
    <location>
        <begin position="156"/>
        <end position="162"/>
    </location>
</feature>
<feature type="strand" evidence="9">
    <location>
        <begin position="169"/>
        <end position="172"/>
    </location>
</feature>
<feature type="strand" evidence="9">
    <location>
        <begin position="181"/>
        <end position="189"/>
    </location>
</feature>
<feature type="strand" evidence="9">
    <location>
        <begin position="194"/>
        <end position="201"/>
    </location>
</feature>
<feature type="strand" evidence="9">
    <location>
        <begin position="216"/>
        <end position="220"/>
    </location>
</feature>
<reference key="1">
    <citation type="journal article" date="1995" name="Immunity">
        <title>Molecular clones of the p58 NK cell receptor reveal immunoglobulin-related molecules with diversity in both the extra- and intracellular domains.</title>
        <authorList>
            <person name="Wagtmann N."/>
            <person name="Biassoni R."/>
            <person name="Cantoni C."/>
            <person name="Verdiani S."/>
            <person name="Malnati M.S."/>
            <person name="Vitale M."/>
            <person name="Bottino C."/>
            <person name="Moretta L."/>
            <person name="Moretta A."/>
            <person name="Long E.O."/>
        </authorList>
    </citation>
    <scope>NUCLEOTIDE SEQUENCE [MRNA]</scope>
    <source>
        <tissue>Natural killer cell</tissue>
    </source>
</reference>
<reference key="2">
    <citation type="journal article" date="1996" name="Immunogenetics">
        <title>Alternatively spliced forms of human killer inhibitory receptors.</title>
        <authorList>
            <person name="Doehring C."/>
            <person name="Samaridis J."/>
            <person name="Colonna M."/>
        </authorList>
    </citation>
    <scope>NUCLEOTIDE SEQUENCE [MRNA]</scope>
</reference>
<reference key="3">
    <citation type="journal article" date="1996" name="Eur. J. Immunol.">
        <title>A novel surface molecule homologous to the p58/p50 family of receptors is selectively expressed on a subset of human natural killer cells and induces both triggering of cell functions and proliferation.</title>
        <authorList>
            <person name="Bottino C."/>
            <person name="Sivori S."/>
            <person name="Vitale M."/>
            <person name="Cantoni C."/>
            <person name="Falco M."/>
            <person name="Pende D."/>
            <person name="Morelli L."/>
            <person name="Augugliaro R."/>
            <person name="Semenzato G."/>
            <person name="Biassoni R."/>
            <person name="Moretta L."/>
            <person name="Moretta A."/>
        </authorList>
    </citation>
    <scope>NUCLEOTIDE SEQUENCE [MRNA]</scope>
    <source>
        <tissue>Lymphoid tissue</tissue>
    </source>
</reference>
<reference key="4">
    <citation type="journal article" date="2003" name="J. Immunol.">
        <title>Activation of a subset of human NK cells upon contact with Plasmodium falciparum-infected erythrocytes.</title>
        <authorList>
            <person name="Artavanis-Tsakonas K."/>
            <person name="Eleme K."/>
            <person name="McQueen K.L."/>
            <person name="Cheng N.W."/>
            <person name="Parham P."/>
            <person name="Davis D.M."/>
            <person name="Riley E.M."/>
        </authorList>
    </citation>
    <scope>NUCLEOTIDE SEQUENCE [MRNA]</scope>
</reference>
<reference key="5">
    <citation type="submission" date="1997-05" db="EMBL/GenBank/DDBJ databases">
        <authorList>
            <person name="Chan H.W."/>
            <person name="Salter R.D."/>
        </authorList>
    </citation>
    <scope>NUCLEOTIDE SEQUENCE [MRNA]</scope>
</reference>
<reference key="6">
    <citation type="journal article" date="2004" name="Genome Res.">
        <title>The status, quality, and expansion of the NIH full-length cDNA project: the Mammalian Gene Collection (MGC).</title>
        <authorList>
            <consortium name="The MGC Project Team"/>
        </authorList>
    </citation>
    <scope>NUCLEOTIDE SEQUENCE [LARGE SCALE MRNA]</scope>
</reference>
<reference key="7">
    <citation type="journal article" date="2013" name="J. Immunol.">
        <title>HLA-F and MHC class I open conformers are ligands for NK cell Ig-like receptors.</title>
        <authorList>
            <person name="Goodridge J.P."/>
            <person name="Burian A."/>
            <person name="Lee N."/>
            <person name="Geraghty D.E."/>
        </authorList>
    </citation>
    <scope>SUBUNIT</scope>
    <scope>INTERACTION WITH HLA-F</scope>
</reference>
<reference key="8">
    <citation type="journal article" date="2009" name="J. Exp. Med.">
        <title>KIR2DS4 is a product of gene conversion with KIR3DL2 that introduced specificity for HLA-A*11 while diminishing avidity for HLA-C.</title>
        <authorList>
            <person name="Graef T."/>
            <person name="Moesta A.K."/>
            <person name="Norman P.J."/>
            <person name="Abi-Rached L."/>
            <person name="Vago L."/>
            <person name="Older Aguilar A.M."/>
            <person name="Gleimer M."/>
            <person name="Hammond J.A."/>
            <person name="Guethlein L.A."/>
            <person name="Bushnell D.A."/>
            <person name="Robinson P.J."/>
            <person name="Parham P."/>
        </authorList>
    </citation>
    <scope>X-RAY CRYSTALLOGRAPHY (2.5 ANGSTROMS) OF 27-221</scope>
    <scope>FUNCTION</scope>
    <scope>DISULFIDE BONDS</scope>
</reference>
<gene>
    <name evidence="6 8" type="primary">KIR2DS4</name>
    <name type="synonym">CD158I</name>
    <name type="synonym">KKA3</name>
    <name type="synonym">NKAT8</name>
</gene>
<organism>
    <name type="scientific">Homo sapiens</name>
    <name type="common">Human</name>
    <dbReference type="NCBI Taxonomy" id="9606"/>
    <lineage>
        <taxon>Eukaryota</taxon>
        <taxon>Metazoa</taxon>
        <taxon>Chordata</taxon>
        <taxon>Craniata</taxon>
        <taxon>Vertebrata</taxon>
        <taxon>Euteleostomi</taxon>
        <taxon>Mammalia</taxon>
        <taxon>Eutheria</taxon>
        <taxon>Euarchontoglires</taxon>
        <taxon>Primates</taxon>
        <taxon>Haplorrhini</taxon>
        <taxon>Catarrhini</taxon>
        <taxon>Hominidae</taxon>
        <taxon>Homo</taxon>
    </lineage>
</organism>
<evidence type="ECO:0000250" key="1"/>
<evidence type="ECO:0000255" key="2"/>
<evidence type="ECO:0000256" key="3">
    <source>
        <dbReference type="SAM" id="MobiDB-lite"/>
    </source>
</evidence>
<evidence type="ECO:0000269" key="4">
    <source>
    </source>
</evidence>
<evidence type="ECO:0000269" key="5">
    <source>
    </source>
</evidence>
<evidence type="ECO:0000303" key="6">
    <source>
    </source>
</evidence>
<evidence type="ECO:0000305" key="7"/>
<evidence type="ECO:0000312" key="8">
    <source>
        <dbReference type="HGNC" id="HGNC:6336"/>
    </source>
</evidence>
<evidence type="ECO:0007829" key="9">
    <source>
        <dbReference type="PDB" id="3H8N"/>
    </source>
</evidence>
<protein>
    <recommendedName>
        <fullName evidence="7">Killer cell immunoglobulin-like receptor 2DS4</fullName>
    </recommendedName>
    <alternativeName>
        <fullName>CD158 antigen-like family member I</fullName>
    </alternativeName>
    <alternativeName>
        <fullName>Natural killer-associated transcript 8</fullName>
        <shortName>NKAT-8</shortName>
    </alternativeName>
    <alternativeName>
        <fullName>P58 natural killer cell receptor clones CL-39/CL-17</fullName>
        <shortName>p58 NK receptor CL-39/CL-17</shortName>
    </alternativeName>
    <cdAntigenName>CD158i</cdAntigenName>
</protein>
<name>KI2S4_HUMAN</name>
<dbReference type="EMBL" id="U24077">
    <property type="protein sequence ID" value="AAC50336.1"/>
    <property type="status" value="ALT_INIT"/>
    <property type="molecule type" value="mRNA"/>
</dbReference>
<dbReference type="EMBL" id="L76671">
    <property type="protein sequence ID" value="AAB36599.1"/>
    <property type="molecule type" value="mRNA"/>
</dbReference>
<dbReference type="EMBL" id="X94609">
    <property type="protein sequence ID" value="CAA64317.1"/>
    <property type="molecule type" value="mRNA"/>
</dbReference>
<dbReference type="EMBL" id="AY366245">
    <property type="protein sequence ID" value="AAR16203.1"/>
    <property type="molecule type" value="mRNA"/>
</dbReference>
<dbReference type="EMBL" id="AF002255">
    <property type="protein sequence ID" value="AAB61281.1"/>
    <property type="molecule type" value="mRNA"/>
</dbReference>
<dbReference type="EMBL" id="BC101977">
    <property type="protein sequence ID" value="AAI01978.1"/>
    <property type="molecule type" value="mRNA"/>
</dbReference>
<dbReference type="EMBL" id="BC103693">
    <property type="protein sequence ID" value="AAI03694.1"/>
    <property type="molecule type" value="mRNA"/>
</dbReference>
<dbReference type="RefSeq" id="NP_001268900.1">
    <property type="nucleotide sequence ID" value="NM_001281971.1"/>
</dbReference>
<dbReference type="RefSeq" id="NP_001268901.1">
    <property type="nucleotide sequence ID" value="NM_001281972.1"/>
</dbReference>
<dbReference type="RefSeq" id="NP_036446.3">
    <property type="nucleotide sequence ID" value="NM_012314.5"/>
</dbReference>
<dbReference type="PDB" id="3H8N">
    <property type="method" value="X-ray"/>
    <property type="resolution" value="2.50 A"/>
    <property type="chains" value="A=27-221"/>
</dbReference>
<dbReference type="PDBsum" id="3H8N"/>
<dbReference type="SMR" id="P43632"/>
<dbReference type="FunCoup" id="P43632">
    <property type="interactions" value="608"/>
</dbReference>
<dbReference type="IntAct" id="P43632">
    <property type="interactions" value="8"/>
</dbReference>
<dbReference type="GlyCosmos" id="P43632">
    <property type="glycosylation" value="5 sites, No reported glycans"/>
</dbReference>
<dbReference type="GlyGen" id="P43632">
    <property type="glycosylation" value="7 sites"/>
</dbReference>
<dbReference type="BioMuta" id="KIR2DS4"/>
<dbReference type="DMDM" id="2828511"/>
<dbReference type="MassIVE" id="P43632"/>
<dbReference type="PeptideAtlas" id="P43632"/>
<dbReference type="DNASU" id="3809"/>
<dbReference type="Ensembl" id="ENST00000611311.1">
    <property type="protein sequence ID" value="ENSP00000484123.1"/>
    <property type="gene ID" value="ENSG00000276885.1"/>
</dbReference>
<dbReference type="Ensembl" id="ENST00000612783.1">
    <property type="protein sequence ID" value="ENSP00000481753.1"/>
    <property type="gene ID" value="ENSG00000274957.1"/>
</dbReference>
<dbReference type="Ensembl" id="ENST00000613654.1">
    <property type="protein sequence ID" value="ENSP00000483112.1"/>
    <property type="gene ID" value="ENSG00000276634.1"/>
</dbReference>
<dbReference type="Ensembl" id="ENST00000614639.1">
    <property type="protein sequence ID" value="ENSP00000481319.1"/>
    <property type="gene ID" value="ENSG00000275731.1"/>
</dbReference>
<dbReference type="Ensembl" id="ENST00000617469.1">
    <property type="protein sequence ID" value="ENSP00000477744.1"/>
    <property type="gene ID" value="ENSG00000276395.1"/>
</dbReference>
<dbReference type="Ensembl" id="ENST00000617825.1">
    <property type="protein sequence ID" value="ENSP00000483274.1"/>
    <property type="gene ID" value="ENSG00000275353.1"/>
</dbReference>
<dbReference type="Ensembl" id="ENST00000619771.2">
    <property type="protein sequence ID" value="ENSP00000478241.1"/>
    <property type="gene ID" value="ENSG00000274947.2"/>
</dbReference>
<dbReference type="Ensembl" id="ENST00000620669.1">
    <property type="protein sequence ID" value="ENSP00000480062.1"/>
    <property type="gene ID" value="ENSG00000274406.1"/>
</dbReference>
<dbReference type="Ensembl" id="ENST00000621436.1">
    <property type="protein sequence ID" value="ENSP00000479843.1"/>
    <property type="gene ID" value="ENSG00000276154.1"/>
</dbReference>
<dbReference type="Ensembl" id="ENST00000638566.2">
    <property type="protein sequence ID" value="ENSP00000492248.1"/>
    <property type="gene ID" value="ENSG00000284264.3"/>
</dbReference>
<dbReference type="Ensembl" id="ENST00000640817.2">
    <property type="protein sequence ID" value="ENSP00000491676.1"/>
    <property type="gene ID" value="ENSG00000283870.3"/>
</dbReference>
<dbReference type="Ensembl" id="ENST00000640941.2">
    <property type="protein sequence ID" value="ENSP00000492546.1"/>
    <property type="gene ID" value="ENSG00000283882.3"/>
</dbReference>
<dbReference type="Ensembl" id="ENST00000642862.2">
    <property type="protein sequence ID" value="ENSP00000494622.1"/>
    <property type="gene ID" value="ENSG00000283882.3"/>
</dbReference>
<dbReference type="Ensembl" id="ENST00000644051.2">
    <property type="protein sequence ID" value="ENSP00000494670.1"/>
    <property type="gene ID" value="ENSG00000283870.3"/>
</dbReference>
<dbReference type="Ensembl" id="ENST00000644154.2">
    <property type="protein sequence ID" value="ENSP00000495680.1"/>
    <property type="gene ID" value="ENSG00000284264.3"/>
</dbReference>
<dbReference type="GeneID" id="3809"/>
<dbReference type="KEGG" id="hsa:3809"/>
<dbReference type="MANE-Select" id="ENST00000619771.2">
    <property type="protein sequence ID" value="ENSP00000478241.1"/>
    <property type="RefSeq nucleotide sequence ID" value="NM_012314.6"/>
    <property type="RefSeq protein sequence ID" value="NP_036446.3"/>
</dbReference>
<dbReference type="UCSC" id="uc061emp.1">
    <property type="organism name" value="human"/>
</dbReference>
<dbReference type="AGR" id="HGNC:6336"/>
<dbReference type="CTD" id="3809"/>
<dbReference type="DisGeNET" id="3809"/>
<dbReference type="GeneCards" id="KIR2DS4"/>
<dbReference type="HGNC" id="HGNC:6336">
    <property type="gene designation" value="KIR2DS4"/>
</dbReference>
<dbReference type="MIM" id="604955">
    <property type="type" value="gene"/>
</dbReference>
<dbReference type="neXtProt" id="NX_P43632"/>
<dbReference type="PharmGKB" id="PA30121"/>
<dbReference type="InParanoid" id="P43632"/>
<dbReference type="OrthoDB" id="9516369at2759"/>
<dbReference type="PAN-GO" id="P43632">
    <property type="GO annotations" value="1 GO annotation based on evolutionary models"/>
</dbReference>
<dbReference type="PhylomeDB" id="P43632"/>
<dbReference type="PathwayCommons" id="P43632"/>
<dbReference type="Reactome" id="R-HSA-2172127">
    <property type="pathway name" value="DAP12 interactions"/>
</dbReference>
<dbReference type="SignaLink" id="P43632"/>
<dbReference type="BioGRID-ORCS" id="3809">
    <property type="hits" value="2 hits in 195 CRISPR screens"/>
</dbReference>
<dbReference type="EvolutionaryTrace" id="P43632"/>
<dbReference type="GeneWiki" id="KIR2DS4"/>
<dbReference type="GenomeRNAi" id="3809"/>
<dbReference type="Pharos" id="P43632">
    <property type="development level" value="Tdark"/>
</dbReference>
<dbReference type="PRO" id="PR:P43632"/>
<dbReference type="Proteomes" id="UP000005640">
    <property type="component" value="Unplaced"/>
</dbReference>
<dbReference type="RNAct" id="P43632">
    <property type="molecule type" value="protein"/>
</dbReference>
<dbReference type="GO" id="GO:0005886">
    <property type="term" value="C:plasma membrane"/>
    <property type="evidence" value="ECO:0000318"/>
    <property type="project" value="GO_Central"/>
</dbReference>
<dbReference type="GO" id="GO:0023029">
    <property type="term" value="F:MHC class Ib protein binding"/>
    <property type="evidence" value="ECO:0000314"/>
    <property type="project" value="UniProtKB"/>
</dbReference>
<dbReference type="GO" id="GO:0002764">
    <property type="term" value="P:immune response-regulating signaling pathway"/>
    <property type="evidence" value="ECO:0000318"/>
    <property type="project" value="GO_Central"/>
</dbReference>
<dbReference type="CDD" id="cd05711">
    <property type="entry name" value="IgC2_D2_LILR_KIR_like"/>
    <property type="match status" value="1"/>
</dbReference>
<dbReference type="FunFam" id="2.60.40.10:FF:000033">
    <property type="entry name" value="Killer cell immunoglobulin-like receptor"/>
    <property type="match status" value="1"/>
</dbReference>
<dbReference type="FunFam" id="2.60.40.10:FF:000049">
    <property type="entry name" value="Leukocyte immunoglobulin-like receptor subfamily B member 1"/>
    <property type="match status" value="1"/>
</dbReference>
<dbReference type="Gene3D" id="2.60.40.10">
    <property type="entry name" value="Immunoglobulins"/>
    <property type="match status" value="2"/>
</dbReference>
<dbReference type="InterPro" id="IPR036179">
    <property type="entry name" value="Ig-like_dom_sf"/>
</dbReference>
<dbReference type="InterPro" id="IPR013783">
    <property type="entry name" value="Ig-like_fold"/>
</dbReference>
<dbReference type="InterPro" id="IPR050412">
    <property type="entry name" value="Ig-like_Receptors_ImmuneReg"/>
</dbReference>
<dbReference type="InterPro" id="IPR003599">
    <property type="entry name" value="Ig_sub"/>
</dbReference>
<dbReference type="InterPro" id="IPR013151">
    <property type="entry name" value="Immunoglobulin_dom"/>
</dbReference>
<dbReference type="PANTHER" id="PTHR11738:SF189">
    <property type="entry name" value="IMMUNOGLOBULIN SUBTYPE DOMAIN-CONTAINING PROTEIN-RELATED"/>
    <property type="match status" value="1"/>
</dbReference>
<dbReference type="PANTHER" id="PTHR11738">
    <property type="entry name" value="MHC CLASS I NK CELL RECEPTOR"/>
    <property type="match status" value="1"/>
</dbReference>
<dbReference type="Pfam" id="PF00047">
    <property type="entry name" value="ig"/>
    <property type="match status" value="2"/>
</dbReference>
<dbReference type="SMART" id="SM00409">
    <property type="entry name" value="IG"/>
    <property type="match status" value="2"/>
</dbReference>
<dbReference type="SUPFAM" id="SSF48726">
    <property type="entry name" value="Immunoglobulin"/>
    <property type="match status" value="2"/>
</dbReference>
<sequence>MSLMVIIMACVGFFLLQGAWPQEGVHRKPSFLALPGHLVKSEETVILQCWSDVMFEHFLLHREGKFNNTLHLIGEHHDGVSKANFSIGPMMPVLAGTYRCYGSVPHSPYQLSAPSDPLDMVIIGLYEKPSLSAQPGPTVQAGENVTLSCSSRSSYDMYHLSREGEAHERRLPAVRSINGTFQADFPLGPATHGGTYRCFGSFRDAPYEWSNSSDPLLVSVTGNPSNSWPSPTEPSSKTGNPRHLHVLIGTSVVKIPFTILLFFLLHRWCSDKKNAAVMDQEPAGNRTVNSEDSDEQDHQEVSYA</sequence>
<proteinExistence type="evidence at protein level"/>
<keyword id="KW-0002">3D-structure</keyword>
<keyword id="KW-1003">Cell membrane</keyword>
<keyword id="KW-1015">Disulfide bond</keyword>
<keyword id="KW-0325">Glycoprotein</keyword>
<keyword id="KW-0393">Immunoglobulin domain</keyword>
<keyword id="KW-0472">Membrane</keyword>
<keyword id="KW-0675">Receptor</keyword>
<keyword id="KW-1185">Reference proteome</keyword>
<keyword id="KW-0677">Repeat</keyword>
<keyword id="KW-0732">Signal</keyword>
<keyword id="KW-0812">Transmembrane</keyword>
<keyword id="KW-1133">Transmembrane helix</keyword>